<accession>A2Z4C5</accession>
<dbReference type="EC" id="2.7.1.134" evidence="6"/>
<dbReference type="EC" id="2.7.1.159" evidence="6"/>
<dbReference type="EMBL" id="CM000135">
    <property type="protein sequence ID" value="EAY77459.1"/>
    <property type="molecule type" value="Genomic_DNA"/>
</dbReference>
<dbReference type="SMR" id="A2Z4C5"/>
<dbReference type="STRING" id="39946.A2Z4C5"/>
<dbReference type="EnsemblPlants" id="BGIOSGA032408-TA">
    <property type="protein sequence ID" value="BGIOSGA032408-PA"/>
    <property type="gene ID" value="BGIOSGA032408"/>
</dbReference>
<dbReference type="EnsemblPlants" id="OsGoSa_10g0000210.01">
    <property type="protein sequence ID" value="OsGoSa_10g0000210.01"/>
    <property type="gene ID" value="OsGoSa_10g0000210"/>
</dbReference>
<dbReference type="EnsemblPlants" id="OsIR64_10g0000190.01">
    <property type="protein sequence ID" value="OsIR64_10g0000190.01"/>
    <property type="gene ID" value="OsIR64_10g0000190"/>
</dbReference>
<dbReference type="EnsemblPlants" id="OsKYG_10g0000210.02">
    <property type="protein sequence ID" value="OsKYG_10g0000210.02"/>
    <property type="gene ID" value="OsKYG_10g0000210"/>
</dbReference>
<dbReference type="EnsemblPlants" id="OsLaMu_10g0000190.01">
    <property type="protein sequence ID" value="OsLaMu_10g0000190.01"/>
    <property type="gene ID" value="OsLaMu_10g0000190"/>
</dbReference>
<dbReference type="EnsemblPlants" id="OsLima_10g0000200.01">
    <property type="protein sequence ID" value="OsLima_10g0000200.01"/>
    <property type="gene ID" value="OsLima_10g0000200"/>
</dbReference>
<dbReference type="EnsemblPlants" id="OsLiXu_10g0000170.01">
    <property type="protein sequence ID" value="OsLiXu_10g0000170.01"/>
    <property type="gene ID" value="OsLiXu_10g0000170"/>
</dbReference>
<dbReference type="EnsemblPlants" id="OsLiXu_Ung0053970.01">
    <property type="protein sequence ID" value="OsLiXu_Ung0053970.01"/>
    <property type="gene ID" value="OsLiXu_Ung0053970"/>
</dbReference>
<dbReference type="EnsemblPlants" id="OsMH63_10G000220_01">
    <property type="protein sequence ID" value="OsMH63_10G000220_01"/>
    <property type="gene ID" value="OsMH63_10G000220"/>
</dbReference>
<dbReference type="EnsemblPlants" id="OsPr106_10g0000170.01">
    <property type="protein sequence ID" value="OsPr106_10g0000170.01"/>
    <property type="gene ID" value="OsPr106_10g0000170"/>
</dbReference>
<dbReference type="EnsemblPlants" id="OsZS97_10G000170_01">
    <property type="protein sequence ID" value="OsZS97_10G000170_01"/>
    <property type="gene ID" value="OsZS97_10G000170"/>
</dbReference>
<dbReference type="Gramene" id="BGIOSGA032408-TA">
    <property type="protein sequence ID" value="BGIOSGA032408-PA"/>
    <property type="gene ID" value="BGIOSGA032408"/>
</dbReference>
<dbReference type="Gramene" id="OsGoSa_10g0000210.01">
    <property type="protein sequence ID" value="OsGoSa_10g0000210.01"/>
    <property type="gene ID" value="OsGoSa_10g0000210"/>
</dbReference>
<dbReference type="Gramene" id="OsIR64_10g0000190.01">
    <property type="protein sequence ID" value="OsIR64_10g0000190.01"/>
    <property type="gene ID" value="OsIR64_10g0000190"/>
</dbReference>
<dbReference type="Gramene" id="OsKYG_10g0000210.02">
    <property type="protein sequence ID" value="OsKYG_10g0000210.02"/>
    <property type="gene ID" value="OsKYG_10g0000210"/>
</dbReference>
<dbReference type="Gramene" id="OsLaMu_10g0000190.01">
    <property type="protein sequence ID" value="OsLaMu_10g0000190.01"/>
    <property type="gene ID" value="OsLaMu_10g0000190"/>
</dbReference>
<dbReference type="Gramene" id="OsLima_10g0000200.01">
    <property type="protein sequence ID" value="OsLima_10g0000200.01"/>
    <property type="gene ID" value="OsLima_10g0000200"/>
</dbReference>
<dbReference type="Gramene" id="OsLiXu_10g0000170.01">
    <property type="protein sequence ID" value="OsLiXu_10g0000170.01"/>
    <property type="gene ID" value="OsLiXu_10g0000170"/>
</dbReference>
<dbReference type="Gramene" id="OsLiXu_Ung0053970.01">
    <property type="protein sequence ID" value="OsLiXu_Ung0053970.01"/>
    <property type="gene ID" value="OsLiXu_Ung0053970"/>
</dbReference>
<dbReference type="Gramene" id="OsMH63_10G000220_01">
    <property type="protein sequence ID" value="OsMH63_10G000220_01"/>
    <property type="gene ID" value="OsMH63_10G000220"/>
</dbReference>
<dbReference type="Gramene" id="OsPr106_10g0000170.01">
    <property type="protein sequence ID" value="OsPr106_10g0000170.01"/>
    <property type="gene ID" value="OsPr106_10g0000170"/>
</dbReference>
<dbReference type="Gramene" id="OsZS97_10G000170_01">
    <property type="protein sequence ID" value="OsZS97_10G000170_01"/>
    <property type="gene ID" value="OsZS97_10G000170"/>
</dbReference>
<dbReference type="HOGENOM" id="CLU_041857_0_0_1"/>
<dbReference type="OMA" id="SAIVHKM"/>
<dbReference type="OrthoDB" id="25308at2759"/>
<dbReference type="Proteomes" id="UP000007015">
    <property type="component" value="Chromosome 10"/>
</dbReference>
<dbReference type="GO" id="GO:0005737">
    <property type="term" value="C:cytoplasm"/>
    <property type="evidence" value="ECO:0007669"/>
    <property type="project" value="TreeGrafter"/>
</dbReference>
<dbReference type="GO" id="GO:0005524">
    <property type="term" value="F:ATP binding"/>
    <property type="evidence" value="ECO:0007669"/>
    <property type="project" value="UniProtKB-KW"/>
</dbReference>
<dbReference type="GO" id="GO:0052726">
    <property type="term" value="F:inositol-1,3,4-trisphosphate 5-kinase activity"/>
    <property type="evidence" value="ECO:0007669"/>
    <property type="project" value="InterPro"/>
</dbReference>
<dbReference type="GO" id="GO:0052725">
    <property type="term" value="F:inositol-1,3,4-trisphosphate 6-kinase activity"/>
    <property type="evidence" value="ECO:0007669"/>
    <property type="project" value="InterPro"/>
</dbReference>
<dbReference type="GO" id="GO:0047325">
    <property type="term" value="F:inositol-3,4,5,6-tetrakisphosphate 1-kinase activity"/>
    <property type="evidence" value="ECO:0007669"/>
    <property type="project" value="UniProtKB-EC"/>
</dbReference>
<dbReference type="GO" id="GO:0000287">
    <property type="term" value="F:magnesium ion binding"/>
    <property type="evidence" value="ECO:0007669"/>
    <property type="project" value="InterPro"/>
</dbReference>
<dbReference type="GO" id="GO:0032957">
    <property type="term" value="P:inositol trisphosphate metabolic process"/>
    <property type="evidence" value="ECO:0007669"/>
    <property type="project" value="InterPro"/>
</dbReference>
<dbReference type="Gene3D" id="3.30.470.20">
    <property type="entry name" value="ATP-grasp fold, B domain"/>
    <property type="match status" value="1"/>
</dbReference>
<dbReference type="InterPro" id="IPR008656">
    <property type="entry name" value="Inositol_tetrakis-P_1-kinase"/>
</dbReference>
<dbReference type="InterPro" id="IPR040464">
    <property type="entry name" value="InsP(3)kin_ATP-grasp"/>
</dbReference>
<dbReference type="InterPro" id="IPR041429">
    <property type="entry name" value="ITPK1_N"/>
</dbReference>
<dbReference type="PANTHER" id="PTHR14217">
    <property type="entry name" value="INOSITOL-TETRAKISPHOSPHATE 1-KINASE"/>
    <property type="match status" value="1"/>
</dbReference>
<dbReference type="PANTHER" id="PTHR14217:SF39">
    <property type="entry name" value="INOSITOL-TETRAKISPHOSPHATE 1-KINASE 3"/>
    <property type="match status" value="1"/>
</dbReference>
<dbReference type="Pfam" id="PF05770">
    <property type="entry name" value="Ins134_P3_kin"/>
    <property type="match status" value="1"/>
</dbReference>
<dbReference type="Pfam" id="PF17927">
    <property type="entry name" value="Ins134_P3_kin_N"/>
    <property type="match status" value="1"/>
</dbReference>
<dbReference type="PIRSF" id="PIRSF038186">
    <property type="entry name" value="ITPK"/>
    <property type="match status" value="1"/>
</dbReference>
<dbReference type="SUPFAM" id="SSF56059">
    <property type="entry name" value="Glutathione synthetase ATP-binding domain-like"/>
    <property type="match status" value="1"/>
</dbReference>
<evidence type="ECO:0000250" key="1">
    <source>
        <dbReference type="UniProtKB" id="Q13572"/>
    </source>
</evidence>
<evidence type="ECO:0000250" key="2">
    <source>
        <dbReference type="UniProtKB" id="Q84Y01"/>
    </source>
</evidence>
<evidence type="ECO:0000250" key="3">
    <source>
        <dbReference type="UniProtKB" id="Q9XYQ1"/>
    </source>
</evidence>
<evidence type="ECO:0000255" key="4">
    <source>
        <dbReference type="PROSITE-ProRule" id="PRU00409"/>
    </source>
</evidence>
<evidence type="ECO:0000256" key="5">
    <source>
        <dbReference type="SAM" id="MobiDB-lite"/>
    </source>
</evidence>
<evidence type="ECO:0000305" key="6"/>
<evidence type="ECO:0000312" key="7">
    <source>
        <dbReference type="EMBL" id="EAY77459.1"/>
    </source>
</evidence>
<reference key="1">
    <citation type="journal article" date="2005" name="PLoS Biol.">
        <title>The genomes of Oryza sativa: a history of duplications.</title>
        <authorList>
            <person name="Yu J."/>
            <person name="Wang J."/>
            <person name="Lin W."/>
            <person name="Li S."/>
            <person name="Li H."/>
            <person name="Zhou J."/>
            <person name="Ni P."/>
            <person name="Dong W."/>
            <person name="Hu S."/>
            <person name="Zeng C."/>
            <person name="Zhang J."/>
            <person name="Zhang Y."/>
            <person name="Li R."/>
            <person name="Xu Z."/>
            <person name="Li S."/>
            <person name="Li X."/>
            <person name="Zheng H."/>
            <person name="Cong L."/>
            <person name="Lin L."/>
            <person name="Yin J."/>
            <person name="Geng J."/>
            <person name="Li G."/>
            <person name="Shi J."/>
            <person name="Liu J."/>
            <person name="Lv H."/>
            <person name="Li J."/>
            <person name="Wang J."/>
            <person name="Deng Y."/>
            <person name="Ran L."/>
            <person name="Shi X."/>
            <person name="Wang X."/>
            <person name="Wu Q."/>
            <person name="Li C."/>
            <person name="Ren X."/>
            <person name="Wang J."/>
            <person name="Wang X."/>
            <person name="Li D."/>
            <person name="Liu D."/>
            <person name="Zhang X."/>
            <person name="Ji Z."/>
            <person name="Zhao W."/>
            <person name="Sun Y."/>
            <person name="Zhang Z."/>
            <person name="Bao J."/>
            <person name="Han Y."/>
            <person name="Dong L."/>
            <person name="Ji J."/>
            <person name="Chen P."/>
            <person name="Wu S."/>
            <person name="Liu J."/>
            <person name="Xiao Y."/>
            <person name="Bu D."/>
            <person name="Tan J."/>
            <person name="Yang L."/>
            <person name="Ye C."/>
            <person name="Zhang J."/>
            <person name="Xu J."/>
            <person name="Zhou Y."/>
            <person name="Yu Y."/>
            <person name="Zhang B."/>
            <person name="Zhuang S."/>
            <person name="Wei H."/>
            <person name="Liu B."/>
            <person name="Lei M."/>
            <person name="Yu H."/>
            <person name="Li Y."/>
            <person name="Xu H."/>
            <person name="Wei S."/>
            <person name="He X."/>
            <person name="Fang L."/>
            <person name="Zhang Z."/>
            <person name="Zhang Y."/>
            <person name="Huang X."/>
            <person name="Su Z."/>
            <person name="Tong W."/>
            <person name="Li J."/>
            <person name="Tong Z."/>
            <person name="Li S."/>
            <person name="Ye J."/>
            <person name="Wang L."/>
            <person name="Fang L."/>
            <person name="Lei T."/>
            <person name="Chen C.-S."/>
            <person name="Chen H.-C."/>
            <person name="Xu Z."/>
            <person name="Li H."/>
            <person name="Huang H."/>
            <person name="Zhang F."/>
            <person name="Xu H."/>
            <person name="Li N."/>
            <person name="Zhao C."/>
            <person name="Li S."/>
            <person name="Dong L."/>
            <person name="Huang Y."/>
            <person name="Li L."/>
            <person name="Xi Y."/>
            <person name="Qi Q."/>
            <person name="Li W."/>
            <person name="Zhang B."/>
            <person name="Hu W."/>
            <person name="Zhang Y."/>
            <person name="Tian X."/>
            <person name="Jiao Y."/>
            <person name="Liang X."/>
            <person name="Jin J."/>
            <person name="Gao L."/>
            <person name="Zheng W."/>
            <person name="Hao B."/>
            <person name="Liu S.-M."/>
            <person name="Wang W."/>
            <person name="Yuan L."/>
            <person name="Cao M."/>
            <person name="McDermott J."/>
            <person name="Samudrala R."/>
            <person name="Wang J."/>
            <person name="Wong G.K.-S."/>
            <person name="Yang H."/>
        </authorList>
    </citation>
    <scope>NUCLEOTIDE SEQUENCE [LARGE SCALE GENOMIC DNA]</scope>
    <source>
        <strain>cv. 93-11</strain>
    </source>
</reference>
<comment type="function">
    <text evidence="2">Kinase that can phosphorylate various inositol polyphosphate such as Ins(3,4,5,6)P4 or Ins(1,3,4)P3 and participates in phytic acid biosynthesis in developing seeds. Phytic acid is the primary storage form of phosphorus in cereal grains and other plant seeds.</text>
</comment>
<comment type="catalytic activity">
    <reaction evidence="6">
        <text>1D-myo-inositol 3,4,5,6-tetrakisphosphate + ATP = 1D-myo-inositol 1,3,4,5,6-pentakisphosphate + ADP + H(+)</text>
        <dbReference type="Rhea" id="RHEA:12452"/>
        <dbReference type="ChEBI" id="CHEBI:15378"/>
        <dbReference type="ChEBI" id="CHEBI:30616"/>
        <dbReference type="ChEBI" id="CHEBI:57539"/>
        <dbReference type="ChEBI" id="CHEBI:57733"/>
        <dbReference type="ChEBI" id="CHEBI:456216"/>
        <dbReference type="EC" id="2.7.1.134"/>
    </reaction>
</comment>
<comment type="catalytic activity">
    <reaction evidence="6">
        <text>1D-myo-inositol 1,3,4-trisphosphate + ATP = 1D-myo-inositol 1,3,4,5-tetrakisphosphate + ADP + H(+)</text>
        <dbReference type="Rhea" id="RHEA:13253"/>
        <dbReference type="ChEBI" id="CHEBI:15378"/>
        <dbReference type="ChEBI" id="CHEBI:30616"/>
        <dbReference type="ChEBI" id="CHEBI:57895"/>
        <dbReference type="ChEBI" id="CHEBI:58414"/>
        <dbReference type="ChEBI" id="CHEBI:456216"/>
        <dbReference type="EC" id="2.7.1.159"/>
    </reaction>
</comment>
<comment type="catalytic activity">
    <reaction evidence="6">
        <text>1D-myo-inositol 1,3,4-trisphosphate + ATP = 1D-myo-inositol 1,3,4,6-tetrakisphosphate + ADP + H(+)</text>
        <dbReference type="Rhea" id="RHEA:20940"/>
        <dbReference type="ChEBI" id="CHEBI:15378"/>
        <dbReference type="ChEBI" id="CHEBI:30616"/>
        <dbReference type="ChEBI" id="CHEBI:57660"/>
        <dbReference type="ChEBI" id="CHEBI:58414"/>
        <dbReference type="ChEBI" id="CHEBI:456216"/>
        <dbReference type="EC" id="2.7.1.159"/>
    </reaction>
</comment>
<comment type="cofactor">
    <cofactor evidence="1">
        <name>Mg(2+)</name>
        <dbReference type="ChEBI" id="CHEBI:18420"/>
    </cofactor>
    <text evidence="1">Binds 2 magnesium ions per subunit.</text>
</comment>
<comment type="subunit">
    <text evidence="1">Monomer.</text>
</comment>
<comment type="similarity">
    <text evidence="6">Belongs to the ITPK1 family.</text>
</comment>
<keyword id="KW-0067">ATP-binding</keyword>
<keyword id="KW-0418">Kinase</keyword>
<keyword id="KW-0460">Magnesium</keyword>
<keyword id="KW-0479">Metal-binding</keyword>
<keyword id="KW-0547">Nucleotide-binding</keyword>
<keyword id="KW-1185">Reference proteome</keyword>
<keyword id="KW-0808">Transferase</keyword>
<feature type="chain" id="PRO_0000431870" description="Inositol-tetrakisphosphate 1-kinase 1">
    <location>
        <begin position="1"/>
        <end position="354"/>
    </location>
</feature>
<feature type="domain" description="ATP-grasp" evidence="4">
    <location>
        <begin position="140"/>
        <end position="347"/>
    </location>
</feature>
<feature type="region of interest" description="Disordered" evidence="5">
    <location>
        <begin position="1"/>
        <end position="24"/>
    </location>
</feature>
<feature type="compositionally biased region" description="Basic and acidic residues" evidence="5">
    <location>
        <begin position="1"/>
        <end position="16"/>
    </location>
</feature>
<feature type="binding site" evidence="3">
    <location>
        <position position="53"/>
    </location>
    <ligand>
        <name>1D-myo-inositol 1,3,4-trisphosphate</name>
        <dbReference type="ChEBI" id="CHEBI:58414"/>
    </ligand>
</feature>
<feature type="binding site" evidence="3">
    <location>
        <position position="95"/>
    </location>
    <ligand>
        <name>1D-myo-inositol 1,3,4-trisphosphate</name>
        <dbReference type="ChEBI" id="CHEBI:58414"/>
    </ligand>
</feature>
<feature type="binding site" evidence="1">
    <location>
        <position position="130"/>
    </location>
    <ligand>
        <name>ATP</name>
        <dbReference type="ChEBI" id="CHEBI:30616"/>
    </ligand>
</feature>
<feature type="binding site" evidence="1">
    <location>
        <position position="180"/>
    </location>
    <ligand>
        <name>ATP</name>
        <dbReference type="ChEBI" id="CHEBI:30616"/>
    </ligand>
</feature>
<feature type="binding site" evidence="3">
    <location>
        <position position="191"/>
    </location>
    <ligand>
        <name>1D-myo-inositol 1,3,4-trisphosphate</name>
        <dbReference type="ChEBI" id="CHEBI:58414"/>
    </ligand>
</feature>
<feature type="binding site" evidence="1">
    <location>
        <begin position="212"/>
        <end position="223"/>
    </location>
    <ligand>
        <name>ATP</name>
        <dbReference type="ChEBI" id="CHEBI:30616"/>
    </ligand>
</feature>
<feature type="binding site" evidence="3">
    <location>
        <position position="223"/>
    </location>
    <ligand>
        <name>1D-myo-inositol 1,3,4-trisphosphate</name>
        <dbReference type="ChEBI" id="CHEBI:58414"/>
    </ligand>
</feature>
<feature type="binding site" evidence="1">
    <location>
        <position position="238"/>
    </location>
    <ligand>
        <name>ATP</name>
        <dbReference type="ChEBI" id="CHEBI:30616"/>
    </ligand>
</feature>
<feature type="binding site" evidence="1">
    <location>
        <position position="303"/>
    </location>
    <ligand>
        <name>Mg(2+)</name>
        <dbReference type="ChEBI" id="CHEBI:18420"/>
        <label>1</label>
    </ligand>
</feature>
<feature type="binding site" evidence="1">
    <location>
        <position position="318"/>
    </location>
    <ligand>
        <name>Mg(2+)</name>
        <dbReference type="ChEBI" id="CHEBI:18420"/>
        <label>1</label>
    </ligand>
</feature>
<feature type="binding site" evidence="1">
    <location>
        <position position="318"/>
    </location>
    <ligand>
        <name>Mg(2+)</name>
        <dbReference type="ChEBI" id="CHEBI:18420"/>
        <label>2</label>
    </ligand>
</feature>
<feature type="binding site" evidence="3">
    <location>
        <position position="320"/>
    </location>
    <ligand>
        <name>1D-myo-inositol 1,3,4-trisphosphate</name>
        <dbReference type="ChEBI" id="CHEBI:58414"/>
    </ligand>
</feature>
<feature type="binding site" evidence="1">
    <location>
        <position position="320"/>
    </location>
    <ligand>
        <name>Mg(2+)</name>
        <dbReference type="ChEBI" id="CHEBI:18420"/>
        <label>2</label>
    </ligand>
</feature>
<name>ITPK1_ORYSI</name>
<protein>
    <recommendedName>
        <fullName evidence="6">Inositol-tetrakisphosphate 1-kinase 1</fullName>
        <ecNumber evidence="6">2.7.1.134</ecNumber>
    </recommendedName>
    <alternativeName>
        <fullName evidence="6">Inositol 1,3,4-trisphosphate 5/6-kinase 1</fullName>
        <shortName evidence="6">Inositol-triphosphate 5/6-kinase 1</shortName>
        <shortName evidence="6">Ins(1,3,4)P(3) 5/6-kinase 1</shortName>
        <shortName evidence="6">OsITP5/6K-1</shortName>
        <shortName evidence="6">OsITPK1</shortName>
        <ecNumber evidence="6">2.7.1.159</ecNumber>
    </alternativeName>
</protein>
<organism>
    <name type="scientific">Oryza sativa subsp. indica</name>
    <name type="common">Rice</name>
    <dbReference type="NCBI Taxonomy" id="39946"/>
    <lineage>
        <taxon>Eukaryota</taxon>
        <taxon>Viridiplantae</taxon>
        <taxon>Streptophyta</taxon>
        <taxon>Embryophyta</taxon>
        <taxon>Tracheophyta</taxon>
        <taxon>Spermatophyta</taxon>
        <taxon>Magnoliopsida</taxon>
        <taxon>Liliopsida</taxon>
        <taxon>Poales</taxon>
        <taxon>Poaceae</taxon>
        <taxon>BOP clade</taxon>
        <taxon>Oryzoideae</taxon>
        <taxon>Oryzeae</taxon>
        <taxon>Oryzinae</taxon>
        <taxon>Oryza</taxon>
        <taxon>Oryza sativa</taxon>
    </lineage>
</organism>
<sequence>MRVHEEASEDKEREVEEAPDLMPLSPPPTAAATAAVVAVAGQRLVVGYALTKKKVKSFLQPKLLSLARKKSIHFVSIDETRPLSEQGPFDIILHKLTDKEWQQVLEDYREEHPEVTVLDPPNAIQHLHNRQSMLQEVADLNLSNAYGEVCTPRQLVIMKDPLSIPSAVAKAGLTLPLVAKPLVVDGTSKSHELSLAYVETSLSMLDPPLVLQEFVNHGGILFKVYVVGETIRVVRRFSLPDVNIYDLENNDGIFRFPRVSCATNTAEDAEVDPSIAELPPKPLLEKLGRELRRRLGLRLFNFDMIREHGRKDRYYVIDINYFPGYGKMPGYEHIFIDFLLSLVQNKYKRRLSGS</sequence>
<gene>
    <name type="primary">ITPK1</name>
    <name evidence="7" type="ORF">OsI_32501</name>
</gene>
<proteinExistence type="inferred from homology"/>